<accession>Q9Z876</accession>
<gene>
    <name evidence="1" type="primary">glgB</name>
    <name type="ordered locus">CPn_0475</name>
    <name type="ordered locus">CP_0279</name>
    <name type="ordered locus">CpB0494</name>
</gene>
<reference key="1">
    <citation type="journal article" date="1999" name="Nat. Genet.">
        <title>Comparative genomes of Chlamydia pneumoniae and C. trachomatis.</title>
        <authorList>
            <person name="Kalman S."/>
            <person name="Mitchell W.P."/>
            <person name="Marathe R."/>
            <person name="Lammel C.J."/>
            <person name="Fan J."/>
            <person name="Hyman R.W."/>
            <person name="Olinger L."/>
            <person name="Grimwood J."/>
            <person name="Davis R.W."/>
            <person name="Stephens R.S."/>
        </authorList>
    </citation>
    <scope>NUCLEOTIDE SEQUENCE [LARGE SCALE GENOMIC DNA]</scope>
    <source>
        <strain>CWL029</strain>
    </source>
</reference>
<reference key="2">
    <citation type="journal article" date="2000" name="Nucleic Acids Res.">
        <title>Genome sequences of Chlamydia trachomatis MoPn and Chlamydia pneumoniae AR39.</title>
        <authorList>
            <person name="Read T.D."/>
            <person name="Brunham R.C."/>
            <person name="Shen C."/>
            <person name="Gill S.R."/>
            <person name="Heidelberg J.F."/>
            <person name="White O."/>
            <person name="Hickey E.K."/>
            <person name="Peterson J.D."/>
            <person name="Utterback T.R."/>
            <person name="Berry K.J."/>
            <person name="Bass S."/>
            <person name="Linher K.D."/>
            <person name="Weidman J.F."/>
            <person name="Khouri H.M."/>
            <person name="Craven B."/>
            <person name="Bowman C."/>
            <person name="Dodson R.J."/>
            <person name="Gwinn M.L."/>
            <person name="Nelson W.C."/>
            <person name="DeBoy R.T."/>
            <person name="Kolonay J.F."/>
            <person name="McClarty G."/>
            <person name="Salzberg S.L."/>
            <person name="Eisen J.A."/>
            <person name="Fraser C.M."/>
        </authorList>
    </citation>
    <scope>NUCLEOTIDE SEQUENCE [LARGE SCALE GENOMIC DNA]</scope>
    <source>
        <strain>AR39</strain>
    </source>
</reference>
<reference key="3">
    <citation type="journal article" date="2000" name="Nucleic Acids Res.">
        <title>Comparison of whole genome sequences of Chlamydia pneumoniae J138 from Japan and CWL029 from USA.</title>
        <authorList>
            <person name="Shirai M."/>
            <person name="Hirakawa H."/>
            <person name="Kimoto M."/>
            <person name="Tabuchi M."/>
            <person name="Kishi F."/>
            <person name="Ouchi K."/>
            <person name="Shiba T."/>
            <person name="Ishii K."/>
            <person name="Hattori M."/>
            <person name="Kuhara S."/>
            <person name="Nakazawa T."/>
        </authorList>
    </citation>
    <scope>NUCLEOTIDE SEQUENCE [LARGE SCALE GENOMIC DNA]</scope>
    <source>
        <strain>J138</strain>
    </source>
</reference>
<reference key="4">
    <citation type="submission" date="2002-05" db="EMBL/GenBank/DDBJ databases">
        <title>The genome sequence of Chlamydia pneumoniae TW183 and comparison with other Chlamydia strains based on whole genome sequence analysis.</title>
        <authorList>
            <person name="Geng M.M."/>
            <person name="Schuhmacher A."/>
            <person name="Muehldorfer I."/>
            <person name="Bensch K.W."/>
            <person name="Schaefer K.P."/>
            <person name="Schneider S."/>
            <person name="Pohl T."/>
            <person name="Essig A."/>
            <person name="Marre R."/>
            <person name="Melchers K."/>
        </authorList>
    </citation>
    <scope>NUCLEOTIDE SEQUENCE [LARGE SCALE GENOMIC DNA]</scope>
    <source>
        <strain>TW-183</strain>
    </source>
</reference>
<feature type="chain" id="PRO_0000188693" description="1,4-alpha-glucan branching enzyme GlgB">
    <location>
        <begin position="1"/>
        <end position="720"/>
    </location>
</feature>
<feature type="active site" description="Nucleophile" evidence="1">
    <location>
        <position position="400"/>
    </location>
</feature>
<feature type="active site" description="Proton donor" evidence="1">
    <location>
        <position position="453"/>
    </location>
</feature>
<proteinExistence type="inferred from homology"/>
<comment type="function">
    <text evidence="1">Catalyzes the formation of the alpha-1,6-glucosidic linkages in glycogen by scission of a 1,4-alpha-linked oligosaccharide from growing alpha-1,4-glucan chains and the subsequent attachment of the oligosaccharide to the alpha-1,6 position.</text>
</comment>
<comment type="catalytic activity">
    <reaction evidence="1">
        <text>Transfers a segment of a (1-&gt;4)-alpha-D-glucan chain to a primary hydroxy group in a similar glucan chain.</text>
        <dbReference type="EC" id="2.4.1.18"/>
    </reaction>
</comment>
<comment type="pathway">
    <text evidence="1">Glycan biosynthesis; glycogen biosynthesis.</text>
</comment>
<comment type="subunit">
    <text evidence="1">Monomer.</text>
</comment>
<comment type="similarity">
    <text evidence="1">Belongs to the glycosyl hydrolase 13 family. GlgB subfamily.</text>
</comment>
<organism>
    <name type="scientific">Chlamydia pneumoniae</name>
    <name type="common">Chlamydophila pneumoniae</name>
    <dbReference type="NCBI Taxonomy" id="83558"/>
    <lineage>
        <taxon>Bacteria</taxon>
        <taxon>Pseudomonadati</taxon>
        <taxon>Chlamydiota</taxon>
        <taxon>Chlamydiia</taxon>
        <taxon>Chlamydiales</taxon>
        <taxon>Chlamydiaceae</taxon>
        <taxon>Chlamydia/Chlamydophila group</taxon>
        <taxon>Chlamydia</taxon>
    </lineage>
</organism>
<protein>
    <recommendedName>
        <fullName evidence="1">1,4-alpha-glucan branching enzyme GlgB</fullName>
        <ecNumber evidence="1">2.4.1.18</ecNumber>
    </recommendedName>
    <alternativeName>
        <fullName evidence="1">1,4-alpha-D-glucan:1,4-alpha-D-glucan 6-glucosyl-transferase</fullName>
    </alternativeName>
    <alternativeName>
        <fullName evidence="1">Alpha-(1-&gt;4)-glucan branching enzyme</fullName>
    </alternativeName>
    <alternativeName>
        <fullName evidence="1">Glycogen branching enzyme</fullName>
        <shortName evidence="1">BE</shortName>
    </alternativeName>
</protein>
<sequence length="720" mass="82839">MVDKLIHPWDLDLLVSGRQKDPHKLLGILASEDSSDHIVIFRPGAHTVAIELLGELHHAVAYRSGLFFLSVPKGIGHGDYRVYHQNGLLAHDPYAFPPLWGEIDSFLFHRGTHYRIYERMGAIPMEVQGISGVLFVLWAPHAQRVSVVGDFNFWHGLVNPLRKISDQGIWELFVPGLGEGIRYKWEIVTQSGNVIVKTDPYGKSFDPPPQGTARVADSESYSWSDHRWMERRSKQSEGPVTIYEVHLGSWQWQEGRPLSYSEMAHRLASYCKEMHYTHVELLPITEHPLNESWGYQVTGYYAPTSRYGTLQEFQYFVDYLHKENIGIILDWVPGHFPVDAFALASFDGEPLYEYTGHSQALHPHWNTFTFDYSRHEVTNFLLGSALFWLDKMHIDGLRVDAVASMLYRDYGREDGEWTPNIYGGKENLESIEFLKHLNSVIHKEFSGVLTFAEESTAFPGVTKDVDQGGLGFDYKWNLGWMHDTFHYFMKDPMYRKYHQKDLTFSLWYAFQESFILPLSHDEVVHGKGSLVNKLPGDTWTRFAQMRVLLSYQICLPGKKLLFMGGEFGQYGEWSPDRPLDWELLNHHYHKTLRNCVSALNALYIHQPYLWMQESSQECFHWVDFHDIENNVIAYYRFAGSNRSSALLCVHHFSASTFPSYVLRCEGVKHCELLLNTDDESFGGSGKGNRAPVVCQDQGVAWGLDIELPPLATVIYLVTFF</sequence>
<name>GLGB_CHLPN</name>
<evidence type="ECO:0000255" key="1">
    <source>
        <dbReference type="HAMAP-Rule" id="MF_00685"/>
    </source>
</evidence>
<keyword id="KW-0119">Carbohydrate metabolism</keyword>
<keyword id="KW-0320">Glycogen biosynthesis</keyword>
<keyword id="KW-0321">Glycogen metabolism</keyword>
<keyword id="KW-0328">Glycosyltransferase</keyword>
<keyword id="KW-0808">Transferase</keyword>
<dbReference type="EC" id="2.4.1.18" evidence="1"/>
<dbReference type="EMBL" id="AE001363">
    <property type="protein sequence ID" value="AAD18615.1"/>
    <property type="molecule type" value="Genomic_DNA"/>
</dbReference>
<dbReference type="EMBL" id="AE002161">
    <property type="protein sequence ID" value="AAF38137.1"/>
    <property type="molecule type" value="Genomic_DNA"/>
</dbReference>
<dbReference type="EMBL" id="BA000008">
    <property type="protein sequence ID" value="BAA98681.1"/>
    <property type="molecule type" value="Genomic_DNA"/>
</dbReference>
<dbReference type="EMBL" id="AE009440">
    <property type="protein sequence ID" value="AAP98425.1"/>
    <property type="molecule type" value="Genomic_DNA"/>
</dbReference>
<dbReference type="PIR" id="E72074">
    <property type="entry name" value="E72074"/>
</dbReference>
<dbReference type="PIR" id="G86549">
    <property type="entry name" value="G86549"/>
</dbReference>
<dbReference type="RefSeq" id="NP_224671.1">
    <property type="nucleotide sequence ID" value="NC_000922.1"/>
</dbReference>
<dbReference type="RefSeq" id="WP_010883113.1">
    <property type="nucleotide sequence ID" value="NZ_LN847257.1"/>
</dbReference>
<dbReference type="SMR" id="Q9Z876"/>
<dbReference type="STRING" id="406984.CPK_ORF00990"/>
<dbReference type="CAZy" id="CBM48">
    <property type="family name" value="Carbohydrate-Binding Module Family 48"/>
</dbReference>
<dbReference type="CAZy" id="GH13">
    <property type="family name" value="Glycoside Hydrolase Family 13"/>
</dbReference>
<dbReference type="GeneID" id="45050520"/>
<dbReference type="KEGG" id="cpa:CP_0279"/>
<dbReference type="KEGG" id="cpj:glgB"/>
<dbReference type="KEGG" id="cpn:CPn_0475"/>
<dbReference type="KEGG" id="cpt:CpB0494"/>
<dbReference type="PATRIC" id="fig|115713.3.peg.532"/>
<dbReference type="eggNOG" id="COG0296">
    <property type="taxonomic scope" value="Bacteria"/>
</dbReference>
<dbReference type="HOGENOM" id="CLU_004245_3_2_0"/>
<dbReference type="OrthoDB" id="9800174at2"/>
<dbReference type="UniPathway" id="UPA00164"/>
<dbReference type="Proteomes" id="UP000000583">
    <property type="component" value="Chromosome"/>
</dbReference>
<dbReference type="Proteomes" id="UP000000801">
    <property type="component" value="Chromosome"/>
</dbReference>
<dbReference type="GO" id="GO:0005829">
    <property type="term" value="C:cytosol"/>
    <property type="evidence" value="ECO:0007669"/>
    <property type="project" value="TreeGrafter"/>
</dbReference>
<dbReference type="GO" id="GO:0003844">
    <property type="term" value="F:1,4-alpha-glucan branching enzyme activity"/>
    <property type="evidence" value="ECO:0007669"/>
    <property type="project" value="UniProtKB-UniRule"/>
</dbReference>
<dbReference type="GO" id="GO:0043169">
    <property type="term" value="F:cation binding"/>
    <property type="evidence" value="ECO:0007669"/>
    <property type="project" value="InterPro"/>
</dbReference>
<dbReference type="GO" id="GO:0004553">
    <property type="term" value="F:hydrolase activity, hydrolyzing O-glycosyl compounds"/>
    <property type="evidence" value="ECO:0007669"/>
    <property type="project" value="InterPro"/>
</dbReference>
<dbReference type="GO" id="GO:0005978">
    <property type="term" value="P:glycogen biosynthetic process"/>
    <property type="evidence" value="ECO:0007669"/>
    <property type="project" value="UniProtKB-UniRule"/>
</dbReference>
<dbReference type="CDD" id="cd11322">
    <property type="entry name" value="AmyAc_Glg_BE"/>
    <property type="match status" value="1"/>
</dbReference>
<dbReference type="CDD" id="cd02855">
    <property type="entry name" value="E_set_GBE_prok_N"/>
    <property type="match status" value="1"/>
</dbReference>
<dbReference type="FunFam" id="2.60.40.10:FF:000169">
    <property type="entry name" value="1,4-alpha-glucan branching enzyme GlgB"/>
    <property type="match status" value="1"/>
</dbReference>
<dbReference type="FunFam" id="3.20.20.80:FF:000003">
    <property type="entry name" value="1,4-alpha-glucan branching enzyme GlgB"/>
    <property type="match status" value="1"/>
</dbReference>
<dbReference type="Gene3D" id="3.20.20.80">
    <property type="entry name" value="Glycosidases"/>
    <property type="match status" value="1"/>
</dbReference>
<dbReference type="Gene3D" id="2.60.40.1180">
    <property type="entry name" value="Golgi alpha-mannosidase II"/>
    <property type="match status" value="1"/>
</dbReference>
<dbReference type="Gene3D" id="2.60.40.10">
    <property type="entry name" value="Immunoglobulins"/>
    <property type="match status" value="1"/>
</dbReference>
<dbReference type="HAMAP" id="MF_00685">
    <property type="entry name" value="GlgB"/>
    <property type="match status" value="1"/>
</dbReference>
<dbReference type="InterPro" id="IPR006048">
    <property type="entry name" value="A-amylase/branching_C"/>
</dbReference>
<dbReference type="InterPro" id="IPR037439">
    <property type="entry name" value="Branching_enzy"/>
</dbReference>
<dbReference type="InterPro" id="IPR006407">
    <property type="entry name" value="GlgB"/>
</dbReference>
<dbReference type="InterPro" id="IPR054169">
    <property type="entry name" value="GlgB_N"/>
</dbReference>
<dbReference type="InterPro" id="IPR044143">
    <property type="entry name" value="GlgB_N_E_set_prok"/>
</dbReference>
<dbReference type="InterPro" id="IPR006047">
    <property type="entry name" value="Glyco_hydro_13_cat_dom"/>
</dbReference>
<dbReference type="InterPro" id="IPR004193">
    <property type="entry name" value="Glyco_hydro_13_N"/>
</dbReference>
<dbReference type="InterPro" id="IPR013780">
    <property type="entry name" value="Glyco_hydro_b"/>
</dbReference>
<dbReference type="InterPro" id="IPR017853">
    <property type="entry name" value="Glycoside_hydrolase_SF"/>
</dbReference>
<dbReference type="InterPro" id="IPR013783">
    <property type="entry name" value="Ig-like_fold"/>
</dbReference>
<dbReference type="InterPro" id="IPR014756">
    <property type="entry name" value="Ig_E-set"/>
</dbReference>
<dbReference type="NCBIfam" id="TIGR01515">
    <property type="entry name" value="branching_enzym"/>
    <property type="match status" value="1"/>
</dbReference>
<dbReference type="NCBIfam" id="NF003811">
    <property type="entry name" value="PRK05402.1"/>
    <property type="match status" value="1"/>
</dbReference>
<dbReference type="NCBIfam" id="NF008967">
    <property type="entry name" value="PRK12313.1"/>
    <property type="match status" value="1"/>
</dbReference>
<dbReference type="PANTHER" id="PTHR43651">
    <property type="entry name" value="1,4-ALPHA-GLUCAN-BRANCHING ENZYME"/>
    <property type="match status" value="1"/>
</dbReference>
<dbReference type="PANTHER" id="PTHR43651:SF3">
    <property type="entry name" value="1,4-ALPHA-GLUCAN-BRANCHING ENZYME"/>
    <property type="match status" value="1"/>
</dbReference>
<dbReference type="Pfam" id="PF00128">
    <property type="entry name" value="Alpha-amylase"/>
    <property type="match status" value="2"/>
</dbReference>
<dbReference type="Pfam" id="PF02806">
    <property type="entry name" value="Alpha-amylase_C"/>
    <property type="match status" value="1"/>
</dbReference>
<dbReference type="Pfam" id="PF02922">
    <property type="entry name" value="CBM_48"/>
    <property type="match status" value="1"/>
</dbReference>
<dbReference type="Pfam" id="PF22019">
    <property type="entry name" value="GlgB_N"/>
    <property type="match status" value="1"/>
</dbReference>
<dbReference type="PIRSF" id="PIRSF000463">
    <property type="entry name" value="GlgB"/>
    <property type="match status" value="1"/>
</dbReference>
<dbReference type="SMART" id="SM00642">
    <property type="entry name" value="Aamy"/>
    <property type="match status" value="1"/>
</dbReference>
<dbReference type="SUPFAM" id="SSF51445">
    <property type="entry name" value="(Trans)glycosidases"/>
    <property type="match status" value="1"/>
</dbReference>
<dbReference type="SUPFAM" id="SSF81296">
    <property type="entry name" value="E set domains"/>
    <property type="match status" value="2"/>
</dbReference>
<dbReference type="SUPFAM" id="SSF51011">
    <property type="entry name" value="Glycosyl hydrolase domain"/>
    <property type="match status" value="1"/>
</dbReference>